<dbReference type="EMBL" id="CP000730">
    <property type="protein sequence ID" value="ABX29303.1"/>
    <property type="status" value="ALT_INIT"/>
    <property type="molecule type" value="Genomic_DNA"/>
</dbReference>
<dbReference type="RefSeq" id="WP_000505015.1">
    <property type="nucleotide sequence ID" value="NC_010079.1"/>
</dbReference>
<dbReference type="SMR" id="A8Z228"/>
<dbReference type="KEGG" id="sax:USA300HOU_1291"/>
<dbReference type="HOGENOM" id="CLU_078802_0_0_9"/>
<dbReference type="GO" id="GO:0003723">
    <property type="term" value="F:RNA binding"/>
    <property type="evidence" value="ECO:0007669"/>
    <property type="project" value="InterPro"/>
</dbReference>
<dbReference type="GO" id="GO:0045893">
    <property type="term" value="P:positive regulation of DNA-templated transcription"/>
    <property type="evidence" value="ECO:0007669"/>
    <property type="project" value="InterPro"/>
</dbReference>
<dbReference type="Gene3D" id="1.20.58.1950">
    <property type="match status" value="1"/>
</dbReference>
<dbReference type="Gene3D" id="1.20.890.100">
    <property type="match status" value="1"/>
</dbReference>
<dbReference type="Gene3D" id="2.30.24.10">
    <property type="entry name" value="CAT RNA-binding domain"/>
    <property type="match status" value="1"/>
</dbReference>
<dbReference type="Gene3D" id="1.10.1790.10">
    <property type="entry name" value="PRD domain"/>
    <property type="match status" value="1"/>
</dbReference>
<dbReference type="InterPro" id="IPR050661">
    <property type="entry name" value="BglG_antiterminators"/>
</dbReference>
<dbReference type="InterPro" id="IPR004341">
    <property type="entry name" value="CAT_RNA-bd_dom"/>
</dbReference>
<dbReference type="InterPro" id="IPR036650">
    <property type="entry name" value="CAT_RNA-bd_dom_sf"/>
</dbReference>
<dbReference type="InterPro" id="IPR011608">
    <property type="entry name" value="PRD"/>
</dbReference>
<dbReference type="InterPro" id="IPR036634">
    <property type="entry name" value="PRD_sf"/>
</dbReference>
<dbReference type="InterPro" id="IPR001550">
    <property type="entry name" value="Transcrpt_antitermin_CS"/>
</dbReference>
<dbReference type="NCBIfam" id="NF047357">
    <property type="entry name" value="antiterm_GlcT"/>
    <property type="match status" value="1"/>
</dbReference>
<dbReference type="PANTHER" id="PTHR30185">
    <property type="entry name" value="CRYPTIC BETA-GLUCOSIDE BGL OPERON ANTITERMINATOR"/>
    <property type="match status" value="1"/>
</dbReference>
<dbReference type="PANTHER" id="PTHR30185:SF16">
    <property type="entry name" value="PROTEIN GLCT"/>
    <property type="match status" value="1"/>
</dbReference>
<dbReference type="Pfam" id="PF03123">
    <property type="entry name" value="CAT_RBD"/>
    <property type="match status" value="1"/>
</dbReference>
<dbReference type="Pfam" id="PF00874">
    <property type="entry name" value="PRD"/>
    <property type="match status" value="2"/>
</dbReference>
<dbReference type="SMART" id="SM01061">
    <property type="entry name" value="CAT_RBD"/>
    <property type="match status" value="1"/>
</dbReference>
<dbReference type="SUPFAM" id="SSF63520">
    <property type="entry name" value="PTS-regulatory domain, PRD"/>
    <property type="match status" value="2"/>
</dbReference>
<dbReference type="SUPFAM" id="SSF50151">
    <property type="entry name" value="SacY-like RNA-binding domain"/>
    <property type="match status" value="1"/>
</dbReference>
<dbReference type="PROSITE" id="PS00654">
    <property type="entry name" value="PRD_1"/>
    <property type="match status" value="1"/>
</dbReference>
<dbReference type="PROSITE" id="PS51372">
    <property type="entry name" value="PRD_2"/>
    <property type="match status" value="2"/>
</dbReference>
<organism>
    <name type="scientific">Staphylococcus aureus (strain USA300 / TCH1516)</name>
    <dbReference type="NCBI Taxonomy" id="451516"/>
    <lineage>
        <taxon>Bacteria</taxon>
        <taxon>Bacillati</taxon>
        <taxon>Bacillota</taxon>
        <taxon>Bacilli</taxon>
        <taxon>Bacillales</taxon>
        <taxon>Staphylococcaceae</taxon>
        <taxon>Staphylococcus</taxon>
    </lineage>
</organism>
<keyword id="KW-0677">Repeat</keyword>
<evidence type="ECO:0000255" key="1">
    <source>
        <dbReference type="PROSITE-ProRule" id="PRU00704"/>
    </source>
</evidence>
<evidence type="ECO:0000305" key="2"/>
<feature type="chain" id="PRO_0000352612" description="Protein GlcT">
    <location>
        <begin position="1"/>
        <end position="283"/>
    </location>
</feature>
<feature type="domain" description="PRD 1" evidence="1">
    <location>
        <begin position="69"/>
        <end position="173"/>
    </location>
</feature>
<feature type="domain" description="PRD 2" evidence="1">
    <location>
        <begin position="174"/>
        <end position="283"/>
    </location>
</feature>
<accession>A8Z228</accession>
<name>GLCT_STAAT</name>
<gene>
    <name type="primary">glcT</name>
    <name type="ordered locus">USA300HOU_1291</name>
</gene>
<comment type="similarity">
    <text evidence="2">Belongs to the transcriptional antiterminator BglG family. GlcT subfamily.</text>
</comment>
<comment type="sequence caution" evidence="2">
    <conflict type="erroneous initiation">
        <sequence resource="EMBL-CDS" id="ABX29303"/>
    </conflict>
</comment>
<sequence length="283" mass="32823">MGEYIVTKTLNNNVVVCTNNDQEVILIGKGIGFNKKEGMALNDQTITIEKIYKLESEQQKAHYKSLVEIADDNVLQVIIDSLNFISNTAMNVDSKQLVVSLTDHIIFAYKRLKQNQVISNPFVMETMQLYSDAYHIAKQVIDQLNAALDVHFPEDEIGFIALHIASNTEDLSMHEMTLINNVIKKGIDIIESDLVTTVDKESLQYQRFIRHVQFLIRRLRRKEYIHAQDDFVSMIKNHYPICYNTAYKILTMIQKQFDVNISESEIIYLTLHIHHFEERINQS</sequence>
<protein>
    <recommendedName>
        <fullName>Protein GlcT</fullName>
    </recommendedName>
</protein>
<reference key="1">
    <citation type="journal article" date="2007" name="BMC Microbiol.">
        <title>Subtle genetic changes enhance virulence of methicillin resistant and sensitive Staphylococcus aureus.</title>
        <authorList>
            <person name="Highlander S.K."/>
            <person name="Hulten K.G."/>
            <person name="Qin X."/>
            <person name="Jiang H."/>
            <person name="Yerrapragada S."/>
            <person name="Mason E.O. Jr."/>
            <person name="Shang Y."/>
            <person name="Williams T.M."/>
            <person name="Fortunov R.M."/>
            <person name="Liu Y."/>
            <person name="Igboeli O."/>
            <person name="Petrosino J."/>
            <person name="Tirumalai M."/>
            <person name="Uzman A."/>
            <person name="Fox G.E."/>
            <person name="Cardenas A.M."/>
            <person name="Muzny D.M."/>
            <person name="Hemphill L."/>
            <person name="Ding Y."/>
            <person name="Dugan S."/>
            <person name="Blyth P.R."/>
            <person name="Buhay C.J."/>
            <person name="Dinh H.H."/>
            <person name="Hawes A.C."/>
            <person name="Holder M."/>
            <person name="Kovar C.L."/>
            <person name="Lee S.L."/>
            <person name="Liu W."/>
            <person name="Nazareth L.V."/>
            <person name="Wang Q."/>
            <person name="Zhou J."/>
            <person name="Kaplan S.L."/>
            <person name="Weinstock G.M."/>
        </authorList>
    </citation>
    <scope>NUCLEOTIDE SEQUENCE [LARGE SCALE GENOMIC DNA]</scope>
    <source>
        <strain>USA300 / TCH1516</strain>
    </source>
</reference>
<proteinExistence type="inferred from homology"/>